<reference key="1">
    <citation type="journal article" date="2008" name="Proc. Natl. Acad. Sci. U.S.A.">
        <title>Complete genome of the uncultured termite group 1 bacteria in a single host protist cell.</title>
        <authorList>
            <person name="Hongoh Y."/>
            <person name="Sharma V.K."/>
            <person name="Prakash T."/>
            <person name="Noda S."/>
            <person name="Taylor T.D."/>
            <person name="Kudo T."/>
            <person name="Sakaki Y."/>
            <person name="Toyoda A."/>
            <person name="Hattori M."/>
            <person name="Ohkuma M."/>
        </authorList>
    </citation>
    <scope>NUCLEOTIDE SEQUENCE [LARGE SCALE GENOMIC DNA]</scope>
</reference>
<gene>
    <name evidence="1" type="primary">rplY</name>
    <name evidence="1" type="synonym">ctc</name>
    <name type="ordered locus">TGRD_709</name>
</gene>
<accession>B1GYU9</accession>
<name>RL25_ENDTX</name>
<protein>
    <recommendedName>
        <fullName evidence="1">Large ribosomal subunit protein bL25</fullName>
    </recommendedName>
    <alternativeName>
        <fullName evidence="3">50S ribosomal protein L25</fullName>
    </alternativeName>
    <alternativeName>
        <fullName evidence="1">General stress protein CTC</fullName>
    </alternativeName>
</protein>
<keyword id="KW-0687">Ribonucleoprotein</keyword>
<keyword id="KW-0689">Ribosomal protein</keyword>
<keyword id="KW-0694">RNA-binding</keyword>
<keyword id="KW-0699">rRNA-binding</keyword>
<feature type="chain" id="PRO_1000142561" description="Large ribosomal subunit protein bL25">
    <location>
        <begin position="1"/>
        <end position="239"/>
    </location>
</feature>
<feature type="region of interest" description="Disordered" evidence="2">
    <location>
        <begin position="211"/>
        <end position="239"/>
    </location>
</feature>
<feature type="compositionally biased region" description="Polar residues" evidence="2">
    <location>
        <begin position="226"/>
        <end position="239"/>
    </location>
</feature>
<evidence type="ECO:0000255" key="1">
    <source>
        <dbReference type="HAMAP-Rule" id="MF_01334"/>
    </source>
</evidence>
<evidence type="ECO:0000256" key="2">
    <source>
        <dbReference type="SAM" id="MobiDB-lite"/>
    </source>
</evidence>
<evidence type="ECO:0000305" key="3"/>
<sequence length="239" mass="25496">MKEVILDAQARTVGSKGDLAFLRKSGKIPAIFYGKGIKPEAIAVSSKVFVSIMEANGANVIINLNFKDGKKAAIVKSLDRDFLTQHTIHIDFHAISLEDKIEVLVPVHIAGVADGVKNFGGVMEFIVREVKVEAIPRNIPQKISVDVKALRIGQGITVADLPELDGVKYVQDSSTLIVHVIAVAAVFEEEKPEAMAGGTATVVQPEVIISKGKKDKEDEEAEKGTSVASPTTATGGTKK</sequence>
<proteinExistence type="inferred from homology"/>
<organism>
    <name type="scientific">Endomicrobium trichonymphae</name>
    <dbReference type="NCBI Taxonomy" id="1408204"/>
    <lineage>
        <taxon>Bacteria</taxon>
        <taxon>Pseudomonadati</taxon>
        <taxon>Elusimicrobiota</taxon>
        <taxon>Endomicrobiia</taxon>
        <taxon>Endomicrobiales</taxon>
        <taxon>Endomicrobiaceae</taxon>
        <taxon>Candidatus Endomicrobiellum</taxon>
    </lineage>
</organism>
<comment type="function">
    <text evidence="1">This is one of the proteins that binds to the 5S RNA in the ribosome where it forms part of the central protuberance.</text>
</comment>
<comment type="subunit">
    <text evidence="1">Part of the 50S ribosomal subunit; part of the 5S rRNA/L5/L18/L25 subcomplex. Contacts the 5S rRNA. Binds to the 5S rRNA independently of L5 and L18.</text>
</comment>
<comment type="similarity">
    <text evidence="1">Belongs to the bacterial ribosomal protein bL25 family. CTC subfamily.</text>
</comment>
<dbReference type="EMBL" id="AP009510">
    <property type="protein sequence ID" value="BAG14192.1"/>
    <property type="molecule type" value="Genomic_DNA"/>
</dbReference>
<dbReference type="RefSeq" id="WP_015423713.1">
    <property type="nucleotide sequence ID" value="NC_020419.1"/>
</dbReference>
<dbReference type="SMR" id="B1GYU9"/>
<dbReference type="STRING" id="471821.TGRD_709"/>
<dbReference type="KEGG" id="rsd:TGRD_709"/>
<dbReference type="HOGENOM" id="CLU_075939_1_0_0"/>
<dbReference type="Proteomes" id="UP000001691">
    <property type="component" value="Chromosome"/>
</dbReference>
<dbReference type="GO" id="GO:0022625">
    <property type="term" value="C:cytosolic large ribosomal subunit"/>
    <property type="evidence" value="ECO:0007669"/>
    <property type="project" value="TreeGrafter"/>
</dbReference>
<dbReference type="GO" id="GO:0008097">
    <property type="term" value="F:5S rRNA binding"/>
    <property type="evidence" value="ECO:0007669"/>
    <property type="project" value="InterPro"/>
</dbReference>
<dbReference type="GO" id="GO:0003735">
    <property type="term" value="F:structural constituent of ribosome"/>
    <property type="evidence" value="ECO:0007669"/>
    <property type="project" value="InterPro"/>
</dbReference>
<dbReference type="GO" id="GO:0006412">
    <property type="term" value="P:translation"/>
    <property type="evidence" value="ECO:0007669"/>
    <property type="project" value="UniProtKB-UniRule"/>
</dbReference>
<dbReference type="CDD" id="cd00495">
    <property type="entry name" value="Ribosomal_L25_TL5_CTC"/>
    <property type="match status" value="1"/>
</dbReference>
<dbReference type="Gene3D" id="2.170.120.20">
    <property type="entry name" value="Ribosomal protein L25, beta domain"/>
    <property type="match status" value="1"/>
</dbReference>
<dbReference type="Gene3D" id="2.40.240.10">
    <property type="entry name" value="Ribosomal Protein L25, Chain P"/>
    <property type="match status" value="1"/>
</dbReference>
<dbReference type="HAMAP" id="MF_01334">
    <property type="entry name" value="Ribosomal_bL25_CTC"/>
    <property type="match status" value="1"/>
</dbReference>
<dbReference type="InterPro" id="IPR020056">
    <property type="entry name" value="Rbsml_bL25/Gln-tRNA_synth_N"/>
</dbReference>
<dbReference type="InterPro" id="IPR011035">
    <property type="entry name" value="Ribosomal_bL25/Gln-tRNA_synth"/>
</dbReference>
<dbReference type="InterPro" id="IPR020057">
    <property type="entry name" value="Ribosomal_bL25_b-dom"/>
</dbReference>
<dbReference type="InterPro" id="IPR037121">
    <property type="entry name" value="Ribosomal_bL25_C"/>
</dbReference>
<dbReference type="InterPro" id="IPR001021">
    <property type="entry name" value="Ribosomal_bL25_long"/>
</dbReference>
<dbReference type="InterPro" id="IPR029751">
    <property type="entry name" value="Ribosomal_L25_dom"/>
</dbReference>
<dbReference type="InterPro" id="IPR020930">
    <property type="entry name" value="Ribosomal_uL5_bac-type"/>
</dbReference>
<dbReference type="NCBIfam" id="TIGR00731">
    <property type="entry name" value="bL25_bact_ctc"/>
    <property type="match status" value="1"/>
</dbReference>
<dbReference type="PANTHER" id="PTHR33284">
    <property type="entry name" value="RIBOSOMAL PROTEIN L25/GLN-TRNA SYNTHETASE, ANTI-CODON-BINDING DOMAIN-CONTAINING PROTEIN"/>
    <property type="match status" value="1"/>
</dbReference>
<dbReference type="PANTHER" id="PTHR33284:SF1">
    <property type="entry name" value="RIBOSOMAL PROTEIN L25_GLN-TRNA SYNTHETASE, ANTI-CODON-BINDING DOMAIN-CONTAINING PROTEIN"/>
    <property type="match status" value="1"/>
</dbReference>
<dbReference type="Pfam" id="PF01386">
    <property type="entry name" value="Ribosomal_L25p"/>
    <property type="match status" value="1"/>
</dbReference>
<dbReference type="Pfam" id="PF14693">
    <property type="entry name" value="Ribosomal_TL5_C"/>
    <property type="match status" value="1"/>
</dbReference>
<dbReference type="SUPFAM" id="SSF50715">
    <property type="entry name" value="Ribosomal protein L25-like"/>
    <property type="match status" value="1"/>
</dbReference>